<feature type="peptide" id="PRO_0000421652" description="Adipokinetic hormone" evidence="3">
    <location>
        <begin position="1"/>
        <end position="8"/>
    </location>
</feature>
<feature type="modified residue" description="Pyrrolidone carboxylic acid" evidence="3">
    <location>
        <position position="1"/>
    </location>
</feature>
<feature type="modified residue" description="Tryptophan amide" evidence="3">
    <location>
        <position position="8"/>
    </location>
</feature>
<accession>B3A0B4</accession>
<name>AKH_AUSRA</name>
<evidence type="ECO:0000250" key="1">
    <source>
        <dbReference type="UniProtKB" id="P55319"/>
    </source>
</evidence>
<evidence type="ECO:0000255" key="2"/>
<evidence type="ECO:0000269" key="3">
    <source>
    </source>
</evidence>
<evidence type="ECO:0000303" key="4">
    <source>
    </source>
</evidence>
<evidence type="ECO:0000305" key="5"/>
<evidence type="ECO:0000305" key="6">
    <source>
    </source>
</evidence>
<protein>
    <recommendedName>
        <fullName evidence="4">Adipokinetic hormone</fullName>
        <shortName evidence="4">AKH</shortName>
    </recommendedName>
</protein>
<keyword id="KW-0027">Amidation</keyword>
<keyword id="KW-0903">Direct protein sequencing</keyword>
<keyword id="KW-0286">Flight</keyword>
<keyword id="KW-0372">Hormone</keyword>
<keyword id="KW-0527">Neuropeptide</keyword>
<keyword id="KW-0873">Pyrrolidone carboxylic acid</keyword>
<keyword id="KW-0964">Secreted</keyword>
<organism>
    <name type="scientific">Austrophasma rawsonvillense</name>
    <name type="common">Gladiator</name>
    <name type="synonym">Heel-walker</name>
    <dbReference type="NCBI Taxonomy" id="253137"/>
    <lineage>
        <taxon>Eukaryota</taxon>
        <taxon>Metazoa</taxon>
        <taxon>Ecdysozoa</taxon>
        <taxon>Arthropoda</taxon>
        <taxon>Hexapoda</taxon>
        <taxon>Insecta</taxon>
        <taxon>Pterygota</taxon>
        <taxon>Neoptera</taxon>
        <taxon>Polyneoptera</taxon>
        <taxon>Mantophasmatodea</taxon>
        <taxon>Austrophasmatidae</taxon>
        <taxon>Austrophasma</taxon>
    </lineage>
</organism>
<comment type="function">
    <text evidence="1">This hormone, released from cells in the corpora cardiaca, causes release of diglycerides from the fat body and stimulation of muscles to use these diglycerides as an energy source during energy-demanding processes.</text>
</comment>
<comment type="subcellular location">
    <subcellularLocation>
        <location evidence="6">Secreted</location>
    </subcellularLocation>
</comment>
<comment type="similarity">
    <text evidence="2">Belongs to the AKH/HRTH/RPCH family.</text>
</comment>
<sequence length="8" mass="948">QVNFTPGW</sequence>
<reference evidence="5" key="1">
    <citation type="journal article" date="2012" name="Syst. Biol.">
        <title>Peptidomics-based phylogeny and biogeography of Mantophasmatodea (Hexapoda).</title>
        <authorList>
            <person name="Predel R."/>
            <person name="Neupert S."/>
            <person name="Huetteroth W."/>
            <person name="Kahnt J."/>
            <person name="Waidelich D."/>
            <person name="Roth S."/>
        </authorList>
    </citation>
    <scope>PROTEIN SEQUENCE</scope>
    <scope>PYROGLUTAMATE FORMATION AT GLN-1</scope>
    <scope>AMIDATION AT TRP-8</scope>
    <source>
        <tissue evidence="3">Corpora cardiaca</tissue>
    </source>
</reference>
<proteinExistence type="evidence at protein level"/>
<dbReference type="GO" id="GO:0005576">
    <property type="term" value="C:extracellular region"/>
    <property type="evidence" value="ECO:0007669"/>
    <property type="project" value="UniProtKB-SubCell"/>
</dbReference>
<dbReference type="GO" id="GO:0005179">
    <property type="term" value="F:hormone activity"/>
    <property type="evidence" value="ECO:0007669"/>
    <property type="project" value="UniProtKB-KW"/>
</dbReference>
<dbReference type="GO" id="GO:0007629">
    <property type="term" value="P:flight behavior"/>
    <property type="evidence" value="ECO:0007669"/>
    <property type="project" value="UniProtKB-KW"/>
</dbReference>
<dbReference type="GO" id="GO:0007218">
    <property type="term" value="P:neuropeptide signaling pathway"/>
    <property type="evidence" value="ECO:0007669"/>
    <property type="project" value="UniProtKB-KW"/>
</dbReference>
<dbReference type="InterPro" id="IPR002047">
    <property type="entry name" value="Adipokinetic_hormone_CS"/>
</dbReference>
<dbReference type="PROSITE" id="PS00256">
    <property type="entry name" value="AKH"/>
    <property type="match status" value="1"/>
</dbReference>